<accession>C0MGL8</accession>
<sequence>MARVKGGVVSRKRRKRILKLAKGYYGAKHILFRTAKEQVMNSYYYAYRDRRQKKRDFRKLWITRINAAARMNGLSYSQLMHGLKLAEIEVNRKMLADLAVNDAAAFTALADAAKAKLGK</sequence>
<protein>
    <recommendedName>
        <fullName evidence="1">Large ribosomal subunit protein bL20</fullName>
    </recommendedName>
    <alternativeName>
        <fullName evidence="2">50S ribosomal protein L20</fullName>
    </alternativeName>
</protein>
<feature type="chain" id="PRO_1000205726" description="Large ribosomal subunit protein bL20">
    <location>
        <begin position="1"/>
        <end position="119"/>
    </location>
</feature>
<keyword id="KW-0687">Ribonucleoprotein</keyword>
<keyword id="KW-0689">Ribosomal protein</keyword>
<keyword id="KW-0694">RNA-binding</keyword>
<keyword id="KW-0699">rRNA-binding</keyword>
<name>RL20_STRS7</name>
<proteinExistence type="inferred from homology"/>
<organism>
    <name type="scientific">Streptococcus equi subsp. zooepidemicus (strain H70)</name>
    <dbReference type="NCBI Taxonomy" id="553483"/>
    <lineage>
        <taxon>Bacteria</taxon>
        <taxon>Bacillati</taxon>
        <taxon>Bacillota</taxon>
        <taxon>Bacilli</taxon>
        <taxon>Lactobacillales</taxon>
        <taxon>Streptococcaceae</taxon>
        <taxon>Streptococcus</taxon>
    </lineage>
</organism>
<dbReference type="EMBL" id="FM204884">
    <property type="protein sequence ID" value="CAW99498.1"/>
    <property type="molecule type" value="Genomic_DNA"/>
</dbReference>
<dbReference type="SMR" id="C0MGL8"/>
<dbReference type="KEGG" id="seq:SZO_11020"/>
<dbReference type="eggNOG" id="COG0292">
    <property type="taxonomic scope" value="Bacteria"/>
</dbReference>
<dbReference type="HOGENOM" id="CLU_123265_0_1_9"/>
<dbReference type="Proteomes" id="UP000001368">
    <property type="component" value="Chromosome"/>
</dbReference>
<dbReference type="GO" id="GO:1990904">
    <property type="term" value="C:ribonucleoprotein complex"/>
    <property type="evidence" value="ECO:0007669"/>
    <property type="project" value="UniProtKB-KW"/>
</dbReference>
<dbReference type="GO" id="GO:0005840">
    <property type="term" value="C:ribosome"/>
    <property type="evidence" value="ECO:0007669"/>
    <property type="project" value="UniProtKB-KW"/>
</dbReference>
<dbReference type="GO" id="GO:0019843">
    <property type="term" value="F:rRNA binding"/>
    <property type="evidence" value="ECO:0007669"/>
    <property type="project" value="UniProtKB-UniRule"/>
</dbReference>
<dbReference type="GO" id="GO:0003735">
    <property type="term" value="F:structural constituent of ribosome"/>
    <property type="evidence" value="ECO:0007669"/>
    <property type="project" value="InterPro"/>
</dbReference>
<dbReference type="GO" id="GO:0000027">
    <property type="term" value="P:ribosomal large subunit assembly"/>
    <property type="evidence" value="ECO:0007669"/>
    <property type="project" value="UniProtKB-UniRule"/>
</dbReference>
<dbReference type="GO" id="GO:0006412">
    <property type="term" value="P:translation"/>
    <property type="evidence" value="ECO:0007669"/>
    <property type="project" value="InterPro"/>
</dbReference>
<dbReference type="CDD" id="cd07026">
    <property type="entry name" value="Ribosomal_L20"/>
    <property type="match status" value="1"/>
</dbReference>
<dbReference type="FunFam" id="1.10.1900.20:FF:000001">
    <property type="entry name" value="50S ribosomal protein L20"/>
    <property type="match status" value="1"/>
</dbReference>
<dbReference type="Gene3D" id="6.10.160.10">
    <property type="match status" value="1"/>
</dbReference>
<dbReference type="Gene3D" id="1.10.1900.20">
    <property type="entry name" value="Ribosomal protein L20"/>
    <property type="match status" value="1"/>
</dbReference>
<dbReference type="HAMAP" id="MF_00382">
    <property type="entry name" value="Ribosomal_bL20"/>
    <property type="match status" value="1"/>
</dbReference>
<dbReference type="InterPro" id="IPR005813">
    <property type="entry name" value="Ribosomal_bL20"/>
</dbReference>
<dbReference type="InterPro" id="IPR049946">
    <property type="entry name" value="RIBOSOMAL_L20_CS"/>
</dbReference>
<dbReference type="InterPro" id="IPR035566">
    <property type="entry name" value="Ribosomal_protein_bL20_C"/>
</dbReference>
<dbReference type="NCBIfam" id="TIGR01032">
    <property type="entry name" value="rplT_bact"/>
    <property type="match status" value="1"/>
</dbReference>
<dbReference type="PANTHER" id="PTHR10986">
    <property type="entry name" value="39S RIBOSOMAL PROTEIN L20"/>
    <property type="match status" value="1"/>
</dbReference>
<dbReference type="Pfam" id="PF00453">
    <property type="entry name" value="Ribosomal_L20"/>
    <property type="match status" value="1"/>
</dbReference>
<dbReference type="PRINTS" id="PR00062">
    <property type="entry name" value="RIBOSOMALL20"/>
</dbReference>
<dbReference type="SUPFAM" id="SSF74731">
    <property type="entry name" value="Ribosomal protein L20"/>
    <property type="match status" value="1"/>
</dbReference>
<dbReference type="PROSITE" id="PS00937">
    <property type="entry name" value="RIBOSOMAL_L20"/>
    <property type="match status" value="1"/>
</dbReference>
<gene>
    <name evidence="1" type="primary">rplT</name>
    <name type="ordered locus">SZO_11020</name>
</gene>
<comment type="function">
    <text evidence="1">Binds directly to 23S ribosomal RNA and is necessary for the in vitro assembly process of the 50S ribosomal subunit. It is not involved in the protein synthesizing functions of that subunit.</text>
</comment>
<comment type="similarity">
    <text evidence="1">Belongs to the bacterial ribosomal protein bL20 family.</text>
</comment>
<reference key="1">
    <citation type="journal article" date="2009" name="PLoS Pathog.">
        <title>Genomic evidence for the evolution of Streptococcus equi: host restriction, increased virulence, and genetic exchange with human pathogens.</title>
        <authorList>
            <person name="Holden M.T.G."/>
            <person name="Heather Z."/>
            <person name="Paillot R."/>
            <person name="Steward K.F."/>
            <person name="Webb K."/>
            <person name="Ainslie F."/>
            <person name="Jourdan T."/>
            <person name="Bason N.C."/>
            <person name="Holroyd N.E."/>
            <person name="Mungall K."/>
            <person name="Quail M.A."/>
            <person name="Sanders M."/>
            <person name="Simmonds M."/>
            <person name="Willey D."/>
            <person name="Brooks K."/>
            <person name="Aanensen D.M."/>
            <person name="Spratt B.G."/>
            <person name="Jolley K.A."/>
            <person name="Maiden M.C.J."/>
            <person name="Kehoe M."/>
            <person name="Chanter N."/>
            <person name="Bentley S.D."/>
            <person name="Robinson C."/>
            <person name="Maskell D.J."/>
            <person name="Parkhill J."/>
            <person name="Waller A.S."/>
        </authorList>
    </citation>
    <scope>NUCLEOTIDE SEQUENCE [LARGE SCALE GENOMIC DNA]</scope>
    <source>
        <strain>H70</strain>
    </source>
</reference>
<evidence type="ECO:0000255" key="1">
    <source>
        <dbReference type="HAMAP-Rule" id="MF_00382"/>
    </source>
</evidence>
<evidence type="ECO:0000305" key="2"/>